<proteinExistence type="inferred from homology"/>
<comment type="function">
    <text evidence="1">Part of the ABC transporter complex XylFGH involved in xylose import. Responsible for energy coupling to the transport system.</text>
</comment>
<comment type="catalytic activity">
    <reaction evidence="1">
        <text>D-xylose(out) + ATP + H2O = D-xylose(in) + ADP + phosphate + H(+)</text>
        <dbReference type="Rhea" id="RHEA:29899"/>
        <dbReference type="ChEBI" id="CHEBI:15377"/>
        <dbReference type="ChEBI" id="CHEBI:15378"/>
        <dbReference type="ChEBI" id="CHEBI:30616"/>
        <dbReference type="ChEBI" id="CHEBI:43474"/>
        <dbReference type="ChEBI" id="CHEBI:53455"/>
        <dbReference type="ChEBI" id="CHEBI:456216"/>
        <dbReference type="EC" id="7.5.2.10"/>
    </reaction>
</comment>
<comment type="subunit">
    <text evidence="1">The complex is composed of two ATP-binding proteins (XylG), two transmembrane proteins (XylH) and a solute-binding protein (XylF).</text>
</comment>
<comment type="subcellular location">
    <subcellularLocation>
        <location evidence="1">Cell inner membrane</location>
        <topology evidence="1">Peripheral membrane protein</topology>
    </subcellularLocation>
</comment>
<comment type="similarity">
    <text evidence="1">Belongs to the ABC transporter superfamily. Xylose importer (TC 3.A.1.2.4) family.</text>
</comment>
<keyword id="KW-0067">ATP-binding</keyword>
<keyword id="KW-0997">Cell inner membrane</keyword>
<keyword id="KW-1003">Cell membrane</keyword>
<keyword id="KW-0472">Membrane</keyword>
<keyword id="KW-0547">Nucleotide-binding</keyword>
<keyword id="KW-1185">Reference proteome</keyword>
<keyword id="KW-0677">Repeat</keyword>
<keyword id="KW-0762">Sugar transport</keyword>
<keyword id="KW-1278">Translocase</keyword>
<keyword id="KW-0813">Transport</keyword>
<reference key="1">
    <citation type="journal article" date="2006" name="Proc. Natl. Acad. Sci. U.S.A.">
        <title>Burkholderia xenovorans LB400 harbors a multi-replicon, 9.73-Mbp genome shaped for versatility.</title>
        <authorList>
            <person name="Chain P.S.G."/>
            <person name="Denef V.J."/>
            <person name="Konstantinidis K.T."/>
            <person name="Vergez L.M."/>
            <person name="Agullo L."/>
            <person name="Reyes V.L."/>
            <person name="Hauser L."/>
            <person name="Cordova M."/>
            <person name="Gomez L."/>
            <person name="Gonzalez M."/>
            <person name="Land M."/>
            <person name="Lao V."/>
            <person name="Larimer F."/>
            <person name="LiPuma J.J."/>
            <person name="Mahenthiralingam E."/>
            <person name="Malfatti S.A."/>
            <person name="Marx C.J."/>
            <person name="Parnell J.J."/>
            <person name="Ramette A."/>
            <person name="Richardson P."/>
            <person name="Seeger M."/>
            <person name="Smith D."/>
            <person name="Spilker T."/>
            <person name="Sul W.J."/>
            <person name="Tsoi T.V."/>
            <person name="Ulrich L.E."/>
            <person name="Zhulin I.B."/>
            <person name="Tiedje J.M."/>
        </authorList>
    </citation>
    <scope>NUCLEOTIDE SEQUENCE [LARGE SCALE GENOMIC DNA]</scope>
    <source>
        <strain>LB400</strain>
    </source>
</reference>
<dbReference type="EC" id="7.5.2.10" evidence="1"/>
<dbReference type="EMBL" id="CP000271">
    <property type="protein sequence ID" value="ABE33373.1"/>
    <property type="molecule type" value="Genomic_DNA"/>
</dbReference>
<dbReference type="RefSeq" id="WP_011490742.1">
    <property type="nucleotide sequence ID" value="NC_007952.1"/>
</dbReference>
<dbReference type="SMR" id="Q13RB6"/>
<dbReference type="STRING" id="266265.Bxe_B2620"/>
<dbReference type="KEGG" id="bxb:DR64_4953"/>
<dbReference type="KEGG" id="bxe:Bxe_B2620"/>
<dbReference type="PATRIC" id="fig|266265.5.peg.5081"/>
<dbReference type="eggNOG" id="COG1129">
    <property type="taxonomic scope" value="Bacteria"/>
</dbReference>
<dbReference type="OrthoDB" id="9776369at2"/>
<dbReference type="Proteomes" id="UP000001817">
    <property type="component" value="Chromosome 2"/>
</dbReference>
<dbReference type="GO" id="GO:0005886">
    <property type="term" value="C:plasma membrane"/>
    <property type="evidence" value="ECO:0007669"/>
    <property type="project" value="UniProtKB-SubCell"/>
</dbReference>
<dbReference type="GO" id="GO:0015614">
    <property type="term" value="F:ABC-type D-xylose transporter activity"/>
    <property type="evidence" value="ECO:0007669"/>
    <property type="project" value="UniProtKB-EC"/>
</dbReference>
<dbReference type="GO" id="GO:0005524">
    <property type="term" value="F:ATP binding"/>
    <property type="evidence" value="ECO:0007669"/>
    <property type="project" value="UniProtKB-KW"/>
</dbReference>
<dbReference type="GO" id="GO:0016887">
    <property type="term" value="F:ATP hydrolysis activity"/>
    <property type="evidence" value="ECO:0007669"/>
    <property type="project" value="InterPro"/>
</dbReference>
<dbReference type="CDD" id="cd03216">
    <property type="entry name" value="ABC_Carb_Monos_I"/>
    <property type="match status" value="1"/>
</dbReference>
<dbReference type="CDD" id="cd03215">
    <property type="entry name" value="ABC_Carb_Monos_II"/>
    <property type="match status" value="1"/>
</dbReference>
<dbReference type="FunFam" id="3.40.50.300:FF:000127">
    <property type="entry name" value="Ribose import ATP-binding protein RbsA"/>
    <property type="match status" value="1"/>
</dbReference>
<dbReference type="Gene3D" id="3.40.50.300">
    <property type="entry name" value="P-loop containing nucleotide triphosphate hydrolases"/>
    <property type="match status" value="2"/>
</dbReference>
<dbReference type="InterPro" id="IPR003593">
    <property type="entry name" value="AAA+_ATPase"/>
</dbReference>
<dbReference type="InterPro" id="IPR050107">
    <property type="entry name" value="ABC_carbohydrate_import_ATPase"/>
</dbReference>
<dbReference type="InterPro" id="IPR003439">
    <property type="entry name" value="ABC_transporter-like_ATP-bd"/>
</dbReference>
<dbReference type="InterPro" id="IPR013455">
    <property type="entry name" value="ABC_transptr_XylG"/>
</dbReference>
<dbReference type="InterPro" id="IPR027417">
    <property type="entry name" value="P-loop_NTPase"/>
</dbReference>
<dbReference type="NCBIfam" id="NF010069">
    <property type="entry name" value="PRK13549.1"/>
    <property type="match status" value="1"/>
</dbReference>
<dbReference type="NCBIfam" id="TIGR02633">
    <property type="entry name" value="xylG"/>
    <property type="match status" value="1"/>
</dbReference>
<dbReference type="PANTHER" id="PTHR43790">
    <property type="entry name" value="CARBOHYDRATE TRANSPORT ATP-BINDING PROTEIN MG119-RELATED"/>
    <property type="match status" value="1"/>
</dbReference>
<dbReference type="PANTHER" id="PTHR43790:SF1">
    <property type="entry name" value="XYLOSE IMPORT ATP-BINDING PROTEIN XYLG"/>
    <property type="match status" value="1"/>
</dbReference>
<dbReference type="Pfam" id="PF00005">
    <property type="entry name" value="ABC_tran"/>
    <property type="match status" value="2"/>
</dbReference>
<dbReference type="SMART" id="SM00382">
    <property type="entry name" value="AAA"/>
    <property type="match status" value="2"/>
</dbReference>
<dbReference type="SUPFAM" id="SSF52540">
    <property type="entry name" value="P-loop containing nucleoside triphosphate hydrolases"/>
    <property type="match status" value="2"/>
</dbReference>
<dbReference type="PROSITE" id="PS50893">
    <property type="entry name" value="ABC_TRANSPORTER_2"/>
    <property type="match status" value="2"/>
</dbReference>
<dbReference type="PROSITE" id="PS51280">
    <property type="entry name" value="XYLG"/>
    <property type="match status" value="1"/>
</dbReference>
<evidence type="ECO:0000255" key="1">
    <source>
        <dbReference type="HAMAP-Rule" id="MF_01722"/>
    </source>
</evidence>
<sequence length="519" mass="55999">MTQPLMTMRGIVKTFSGVKALDGIDLTIAPGECVGLCGENGAGKSTLMKVLSGVYPWGTWDGEIIWEGAPLKAASVRDTERAGIIIIHQELMLVPELSVAENIFLGNEITLPGGRMNYAAMYQRADELLRELGISGINAAQPVMNYGGGHQQLIEIAKALNKRAKLLILDEPSSSLTASEISILLDIVRDLKRRGVACVYISHKLDEVAAVCDTISVIRDGRHVATEPMRALTTDRIISLMVGREIKNLFPREPHPIGDVIFEARHVTCFDVTNPRRKRVNDVSFALRRGEILGVAGLVGAGRTELMQAIFGAYPGVSEATVVMEGKPLKIRAPVDAIRAGIGMVPEDRKRHGIVPGLSVGHNITLAVLGRFASAGRIDSAAELDTIHTEMKRLSVRAAHPMLSIASLSGGNQQKAVLTRMLLTNPKVLILDEPTRGVDVGAKYEIYKLIFQLAQRGMSIVMVSSELPEVLGISDRVLVIGEGELRGDFVNDGLTQEDILSAAIRPVQRSPNPTVASAA</sequence>
<protein>
    <recommendedName>
        <fullName evidence="1">Xylose import ATP-binding protein XylG</fullName>
        <ecNumber evidence="1">7.5.2.10</ecNumber>
    </recommendedName>
</protein>
<gene>
    <name evidence="1" type="primary">xylG</name>
    <name type="ordered locus">Bxeno_B0405</name>
    <name type="ORF">Bxe_B2620</name>
</gene>
<accession>Q13RB6</accession>
<organism>
    <name type="scientific">Paraburkholderia xenovorans (strain LB400)</name>
    <dbReference type="NCBI Taxonomy" id="266265"/>
    <lineage>
        <taxon>Bacteria</taxon>
        <taxon>Pseudomonadati</taxon>
        <taxon>Pseudomonadota</taxon>
        <taxon>Betaproteobacteria</taxon>
        <taxon>Burkholderiales</taxon>
        <taxon>Burkholderiaceae</taxon>
        <taxon>Paraburkholderia</taxon>
    </lineage>
</organism>
<feature type="chain" id="PRO_0000271499" description="Xylose import ATP-binding protein XylG">
    <location>
        <begin position="1"/>
        <end position="519"/>
    </location>
</feature>
<feature type="domain" description="ABC transporter 1" evidence="1">
    <location>
        <begin position="6"/>
        <end position="245"/>
    </location>
</feature>
<feature type="domain" description="ABC transporter 2" evidence="1">
    <location>
        <begin position="262"/>
        <end position="507"/>
    </location>
</feature>
<feature type="binding site" evidence="1">
    <location>
        <begin position="38"/>
        <end position="45"/>
    </location>
    <ligand>
        <name>ATP</name>
        <dbReference type="ChEBI" id="CHEBI:30616"/>
    </ligand>
</feature>
<name>XYLG_PARXL</name>